<gene>
    <name evidence="12" type="primary">DUO1</name>
    <name evidence="13" type="synonym">MYB125</name>
    <name evidence="15" type="ordered locus">At3g60460</name>
    <name evidence="16" type="ORF">T8B10.120</name>
</gene>
<evidence type="ECO:0000255" key="1">
    <source>
        <dbReference type="PROSITE-ProRule" id="PRU00625"/>
    </source>
</evidence>
<evidence type="ECO:0000256" key="2">
    <source>
        <dbReference type="SAM" id="MobiDB-lite"/>
    </source>
</evidence>
<evidence type="ECO:0000269" key="3">
    <source>
    </source>
</evidence>
<evidence type="ECO:0000269" key="4">
    <source>
    </source>
</evidence>
<evidence type="ECO:0000269" key="5">
    <source>
    </source>
</evidence>
<evidence type="ECO:0000269" key="6">
    <source>
    </source>
</evidence>
<evidence type="ECO:0000269" key="7">
    <source>
    </source>
</evidence>
<evidence type="ECO:0000269" key="8">
    <source>
    </source>
</evidence>
<evidence type="ECO:0000269" key="9">
    <source>
    </source>
</evidence>
<evidence type="ECO:0000269" key="10">
    <source>
    </source>
</evidence>
<evidence type="ECO:0000269" key="11">
    <source>
    </source>
</evidence>
<evidence type="ECO:0000303" key="12">
    <source>
    </source>
</evidence>
<evidence type="ECO:0000303" key="13">
    <source>
    </source>
</evidence>
<evidence type="ECO:0000305" key="14"/>
<evidence type="ECO:0000312" key="15">
    <source>
        <dbReference type="Araport" id="AT3G60460"/>
    </source>
</evidence>
<evidence type="ECO:0000312" key="16">
    <source>
        <dbReference type="EMBL" id="CAB81832.1"/>
    </source>
</evidence>
<protein>
    <recommendedName>
        <fullName evidence="12">Transcription factor DUO1</fullName>
    </recommendedName>
    <alternativeName>
        <fullName evidence="13">Myb-related protein 125</fullName>
        <shortName evidence="13">AtMYB125</shortName>
    </alternativeName>
    <alternativeName>
        <fullName evidence="12">Protein DUO POLLEN 1</fullName>
    </alternativeName>
</protein>
<name>DUO1_ARATH</name>
<reference key="1">
    <citation type="journal article" date="2011" name="Plant Cell">
        <title>The R2R3 MYB transcription factor DUO1 activates a male germline-specific regulon essential for sperm cell differentiation in Arabidopsis.</title>
        <authorList>
            <person name="Borg M."/>
            <person name="Brownfield L."/>
            <person name="Khatab H."/>
            <person name="Sidorova A."/>
            <person name="Lingaya M."/>
            <person name="Twell D."/>
        </authorList>
    </citation>
    <scope>NUCLEOTIDE SEQUENCE [MRNA]</scope>
    <scope>FUNCTION</scope>
    <source>
        <strain>cv. Columbia</strain>
        <tissue>Pollen</tissue>
    </source>
</reference>
<reference key="2">
    <citation type="journal article" date="2000" name="Nature">
        <title>Sequence and analysis of chromosome 3 of the plant Arabidopsis thaliana.</title>
        <authorList>
            <person name="Salanoubat M."/>
            <person name="Lemcke K."/>
            <person name="Rieger M."/>
            <person name="Ansorge W."/>
            <person name="Unseld M."/>
            <person name="Fartmann B."/>
            <person name="Valle G."/>
            <person name="Bloecker H."/>
            <person name="Perez-Alonso M."/>
            <person name="Obermaier B."/>
            <person name="Delseny M."/>
            <person name="Boutry M."/>
            <person name="Grivell L.A."/>
            <person name="Mache R."/>
            <person name="Puigdomenech P."/>
            <person name="De Simone V."/>
            <person name="Choisne N."/>
            <person name="Artiguenave F."/>
            <person name="Robert C."/>
            <person name="Brottier P."/>
            <person name="Wincker P."/>
            <person name="Cattolico L."/>
            <person name="Weissenbach J."/>
            <person name="Saurin W."/>
            <person name="Quetier F."/>
            <person name="Schaefer M."/>
            <person name="Mueller-Auer S."/>
            <person name="Gabel C."/>
            <person name="Fuchs M."/>
            <person name="Benes V."/>
            <person name="Wurmbach E."/>
            <person name="Drzonek H."/>
            <person name="Erfle H."/>
            <person name="Jordan N."/>
            <person name="Bangert S."/>
            <person name="Wiedelmann R."/>
            <person name="Kranz H."/>
            <person name="Voss H."/>
            <person name="Holland R."/>
            <person name="Brandt P."/>
            <person name="Nyakatura G."/>
            <person name="Vezzi A."/>
            <person name="D'Angelo M."/>
            <person name="Pallavicini A."/>
            <person name="Toppo S."/>
            <person name="Simionati B."/>
            <person name="Conrad A."/>
            <person name="Hornischer K."/>
            <person name="Kauer G."/>
            <person name="Loehnert T.-H."/>
            <person name="Nordsiek G."/>
            <person name="Reichelt J."/>
            <person name="Scharfe M."/>
            <person name="Schoen O."/>
            <person name="Bargues M."/>
            <person name="Terol J."/>
            <person name="Climent J."/>
            <person name="Navarro P."/>
            <person name="Collado C."/>
            <person name="Perez-Perez A."/>
            <person name="Ottenwaelder B."/>
            <person name="Duchemin D."/>
            <person name="Cooke R."/>
            <person name="Laudie M."/>
            <person name="Berger-Llauro C."/>
            <person name="Purnelle B."/>
            <person name="Masuy D."/>
            <person name="de Haan M."/>
            <person name="Maarse A.C."/>
            <person name="Alcaraz J.-P."/>
            <person name="Cottet A."/>
            <person name="Casacuberta E."/>
            <person name="Monfort A."/>
            <person name="Argiriou A."/>
            <person name="Flores M."/>
            <person name="Liguori R."/>
            <person name="Vitale D."/>
            <person name="Mannhaupt G."/>
            <person name="Haase D."/>
            <person name="Schoof H."/>
            <person name="Rudd S."/>
            <person name="Zaccaria P."/>
            <person name="Mewes H.-W."/>
            <person name="Mayer K.F.X."/>
            <person name="Kaul S."/>
            <person name="Town C.D."/>
            <person name="Koo H.L."/>
            <person name="Tallon L.J."/>
            <person name="Jenkins J."/>
            <person name="Rooney T."/>
            <person name="Rizzo M."/>
            <person name="Walts A."/>
            <person name="Utterback T."/>
            <person name="Fujii C.Y."/>
            <person name="Shea T.P."/>
            <person name="Creasy T.H."/>
            <person name="Haas B."/>
            <person name="Maiti R."/>
            <person name="Wu D."/>
            <person name="Peterson J."/>
            <person name="Van Aken S."/>
            <person name="Pai G."/>
            <person name="Militscher J."/>
            <person name="Sellers P."/>
            <person name="Gill J.E."/>
            <person name="Feldblyum T.V."/>
            <person name="Preuss D."/>
            <person name="Lin X."/>
            <person name="Nierman W.C."/>
            <person name="Salzberg S.L."/>
            <person name="White O."/>
            <person name="Venter J.C."/>
            <person name="Fraser C.M."/>
            <person name="Kaneko T."/>
            <person name="Nakamura Y."/>
            <person name="Sato S."/>
            <person name="Kato T."/>
            <person name="Asamizu E."/>
            <person name="Sasamoto S."/>
            <person name="Kimura T."/>
            <person name="Idesawa K."/>
            <person name="Kawashima K."/>
            <person name="Kishida Y."/>
            <person name="Kiyokawa C."/>
            <person name="Kohara M."/>
            <person name="Matsumoto M."/>
            <person name="Matsuno A."/>
            <person name="Muraki A."/>
            <person name="Nakayama S."/>
            <person name="Nakazaki N."/>
            <person name="Shinpo S."/>
            <person name="Takeuchi C."/>
            <person name="Wada T."/>
            <person name="Watanabe A."/>
            <person name="Yamada M."/>
            <person name="Yasuda M."/>
            <person name="Tabata S."/>
        </authorList>
    </citation>
    <scope>NUCLEOTIDE SEQUENCE [LARGE SCALE GENOMIC DNA]</scope>
    <source>
        <strain>cv. Columbia</strain>
    </source>
</reference>
<reference key="3">
    <citation type="journal article" date="2017" name="Plant J.">
        <title>Araport11: a complete reannotation of the Arabidopsis thaliana reference genome.</title>
        <authorList>
            <person name="Cheng C.Y."/>
            <person name="Krishnakumar V."/>
            <person name="Chan A.P."/>
            <person name="Thibaud-Nissen F."/>
            <person name="Schobel S."/>
            <person name="Town C.D."/>
        </authorList>
    </citation>
    <scope>GENOME REANNOTATION</scope>
    <source>
        <strain>cv. Columbia</strain>
    </source>
</reference>
<reference key="4">
    <citation type="submission" date="2002-01" db="EMBL/GenBank/DDBJ databases">
        <title>The R2R3-MYB gene family in Arabidopsis thaliana.</title>
        <authorList>
            <person name="Stracke R."/>
            <person name="Werber M."/>
            <person name="Weisshaar B."/>
        </authorList>
    </citation>
    <scope>NUCLEOTIDE SEQUENCE [MRNA] OF 4-300</scope>
    <source>
        <strain>cv. Columbia</strain>
    </source>
</reference>
<reference key="5">
    <citation type="journal article" date="2004" name="Genome Biol.">
        <title>Identification of conserved gene structures and carboxy-terminal motifs in the Myb gene family of Arabidopsis and Oryza sativa L. ssp. indica.</title>
        <authorList>
            <person name="Jiang C."/>
            <person name="Gu X."/>
            <person name="Peterson T."/>
        </authorList>
    </citation>
    <scope>GENE FAMILY</scope>
</reference>
<reference key="6">
    <citation type="journal article" date="2005" name="Curr. Biol.">
        <title>A novel class of MYB factors controls sperm-cell formation in plants.</title>
        <authorList>
            <person name="Rotman N."/>
            <person name="Durbarry A."/>
            <person name="Wardle A."/>
            <person name="Yang W.C."/>
            <person name="Chaboud A."/>
            <person name="Faure J.E."/>
            <person name="Berger F."/>
            <person name="Twell D."/>
        </authorList>
    </citation>
    <scope>FUNCTION</scope>
    <scope>DISRUPTION PHENOTYPE</scope>
    <scope>TISSUE SPECIFICITY</scope>
    <scope>DEVELOPMENTAL STAGE</scope>
    <scope>SUBCELLULAR LOCATION</scope>
</reference>
<reference key="7">
    <citation type="journal article" date="2005" name="Plant Physiol.">
        <title>Male germ line development in Arabidopsis. duo pollen mutants reveal gametophytic regulators of generative cell cycle progression.</title>
        <authorList>
            <person name="Durbarry A."/>
            <person name="Vizir I."/>
            <person name="Twell D."/>
        </authorList>
    </citation>
    <scope>FUNCTION</scope>
    <scope>DISRUPTION PHENOTYPE</scope>
    <source>
        <strain>cv. Columbia</strain>
        <strain>cv. No-0</strain>
    </source>
</reference>
<reference key="8">
    <citation type="journal article" date="2009" name="PLoS Genet.">
        <title>A plant germline-specific integrator of sperm specification and cell cycle progression.</title>
        <authorList>
            <person name="Brownfield L."/>
            <person name="Hafidh S."/>
            <person name="Borg M."/>
            <person name="Sidorova A."/>
            <person name="Mori T."/>
            <person name="Twell D."/>
        </authorList>
    </citation>
    <scope>FUNCTION</scope>
    <scope>DISRUPTION PHENOTYPE</scope>
    <scope>DEVELOPMENTAL STAGE</scope>
    <source>
        <strain>cv. Columbia</strain>
        <strain>cv. No-0</strain>
    </source>
</reference>
<reference key="9">
    <citation type="journal article" date="2011" name="Plant Cell">
        <title>The anaphase-promoting complex is a dual integrator that regulates both MicroRNA-mediated transcriptional regulation of cyclin B1 and degradation of Cyclin B1 during Arabidopsis male gametophyte development.</title>
        <authorList>
            <person name="Zheng B."/>
            <person name="Chen X."/>
            <person name="McCormick S."/>
        </authorList>
    </citation>
    <scope>REGULATION BY MIR159</scope>
    <source>
        <strain>cv. Columbia</strain>
    </source>
</reference>
<reference key="10">
    <citation type="journal article" date="2012" name="Curr. Biol.">
        <title>Gamete fusion is required to block multiple pollen tubes from entering an Arabidopsis ovule.</title>
        <authorList>
            <person name="Beale K.M."/>
            <person name="Leydon A.R."/>
            <person name="Johnson M.A."/>
        </authorList>
    </citation>
    <scope>DISRUPTION PHENOTYPE</scope>
    <source>
        <strain>cv. No-0</strain>
    </source>
</reference>
<reference key="11">
    <citation type="journal article" date="2014" name="Plant Cell">
        <title>An EAR-dependent regulatory module promotes male germ cell division and sperm fertility in Arabidopsis.</title>
        <authorList>
            <person name="Borg M."/>
            <person name="Rutley N."/>
            <person name="Kagale S."/>
            <person name="Hamamura Y."/>
            <person name="Gherghinoiu M."/>
            <person name="Kumar S."/>
            <person name="Sari U."/>
            <person name="Esparza-Franco M.A."/>
            <person name="Sakamoto W."/>
            <person name="Rozwadowski K."/>
            <person name="Higashiyama T."/>
            <person name="Twell D."/>
        </authorList>
    </citation>
    <scope>FUNCTION IN DAZ1 AND DAZ2 REGULATION</scope>
    <scope>DISRUPTION PHENOTYPE</scope>
    <source>
        <strain>cv. Columbia</strain>
        <strain>cv. No-0</strain>
    </source>
</reference>
<reference key="12">
    <citation type="journal article" date="2014" name="PLoS Genet.">
        <title>An ARID domain-containing protein within nuclear bodies is required for sperm cell formation in Arabidopsis thaliana.</title>
        <authorList>
            <person name="Zheng B."/>
            <person name="He H."/>
            <person name="Zheng Y."/>
            <person name="Wu W."/>
            <person name="McCormick S."/>
        </authorList>
    </citation>
    <scope>INDUCTION BY ARID1</scope>
    <source>
        <strain>cv. Columbia</strain>
    </source>
</reference>
<reference key="13">
    <citation type="journal article" date="2017" name="Plant Physiol.">
        <title>A conserved cis-regulatory module determines germline fate through activation of the transcription factor DUO1 promoter.</title>
        <authorList>
            <person name="Peters B."/>
            <person name="Casey J."/>
            <person name="Aidley J."/>
            <person name="Zohrab S."/>
            <person name="Borg M."/>
            <person name="Twell D."/>
            <person name="Brownfield L."/>
        </authorList>
    </citation>
    <scope>DEVELOPMENTAL STAGE</scope>
    <source>
        <strain>cv. Columbia</strain>
    </source>
</reference>
<organism>
    <name type="scientific">Arabidopsis thaliana</name>
    <name type="common">Mouse-ear cress</name>
    <dbReference type="NCBI Taxonomy" id="3702"/>
    <lineage>
        <taxon>Eukaryota</taxon>
        <taxon>Viridiplantae</taxon>
        <taxon>Streptophyta</taxon>
        <taxon>Embryophyta</taxon>
        <taxon>Tracheophyta</taxon>
        <taxon>Spermatophyta</taxon>
        <taxon>Magnoliopsida</taxon>
        <taxon>eudicotyledons</taxon>
        <taxon>Gunneridae</taxon>
        <taxon>Pentapetalae</taxon>
        <taxon>rosids</taxon>
        <taxon>malvids</taxon>
        <taxon>Brassicales</taxon>
        <taxon>Brassicaceae</taxon>
        <taxon>Camelineae</taxon>
        <taxon>Arabidopsis</taxon>
    </lineage>
</organism>
<keyword id="KW-0010">Activator</keyword>
<keyword id="KW-0131">Cell cycle</keyword>
<keyword id="KW-0217">Developmental protein</keyword>
<keyword id="KW-0238">DNA-binding</keyword>
<keyword id="KW-0539">Nucleus</keyword>
<keyword id="KW-1185">Reference proteome</keyword>
<keyword id="KW-0677">Repeat</keyword>
<keyword id="KW-0804">Transcription</keyword>
<keyword id="KW-0805">Transcription regulation</keyword>
<sequence>MRKMEAKKEEIKKGPWKAEEDEVLINHVKRYGPRDWSSIRSKGLLQRTGKSCRLRWVNKLRPNLKNGCKFSADEERTVIELQSEFGNKWARIATYLPGRTDNDVKNFWSSRQKRLARILHNSSDASSSSFNPKSSSSHRLKGKNVKPIRQSSQGFGLVEEEVTVSSSCSQMVPYSSDQVGDEVLRLPDLGVKLEHQPFAFGTDLVLAEYSDSQNDANQQAISPFSPESRELLARLDDPFYYDILGPADSSEPLFALPQPFFEPSPVPRRCRHVSKDEEADVFLDDFPADMFDQVDPIPSP</sequence>
<feature type="chain" id="PRO_0000440263" description="Transcription factor DUO1">
    <location>
        <begin position="1"/>
        <end position="300"/>
    </location>
</feature>
<feature type="domain" description="HTH myb-type 1" evidence="1">
    <location>
        <begin position="8"/>
        <end position="64"/>
    </location>
</feature>
<feature type="domain" description="HTH myb-type 2" evidence="1">
    <location>
        <begin position="65"/>
        <end position="116"/>
    </location>
</feature>
<feature type="DNA-binding region" description="H-T-H motif" evidence="1">
    <location>
        <begin position="36"/>
        <end position="60"/>
    </location>
</feature>
<feature type="DNA-binding region" description="H-T-H motif" evidence="1">
    <location>
        <begin position="89"/>
        <end position="112"/>
    </location>
</feature>
<feature type="region of interest" description="Disordered" evidence="2">
    <location>
        <begin position="123"/>
        <end position="145"/>
    </location>
</feature>
<feature type="compositionally biased region" description="Low complexity" evidence="2">
    <location>
        <begin position="123"/>
        <end position="135"/>
    </location>
</feature>
<feature type="compositionally biased region" description="Basic residues" evidence="2">
    <location>
        <begin position="136"/>
        <end position="145"/>
    </location>
</feature>
<comment type="function">
    <text evidence="3 4 5 6 9">Transcription activator that acts as a positive regulator of male germline development by promoting both gametic cell specification and cell cycle progression (PubMed:15618418, PubMed:15694308, PubMed:19300502, PubMed:21285328). Binds to canonical MYB sites 5'-AACCGTC-3', 5'-AAACCGC-3' and 5'-AACCGT-3' in promoters to trigger the expression of male germline-specific or enriched genes (e.g. MGH3, GEX2 and GCS1), including those required for fertilization (PubMed:19300502, PubMed:21285328). Required for sperm cell specification leading to pollen maturation by activating a germline-specific regulon (PubMed:15618418, PubMed:15694308, PubMed:19300502, PubMed:21285328). Involved in pollen mitosis entry at G2-M transition via the regulation of CYCB1-1, DAZ1 and DAZ2 expression (PubMed:15618418, PubMed:19300502, PubMed:24876252).</text>
</comment>
<comment type="subcellular location">
    <subcellularLocation>
        <location evidence="1 4">Nucleus</location>
    </subcellularLocation>
    <text evidence="4">Accumulates in sperm-cell nuclei.</text>
</comment>
<comment type="tissue specificity">
    <text evidence="4">Confined to inflorescences, especially in stamens and pollen.</text>
</comment>
<comment type="developmental stage">
    <text evidence="4 5 11">Strict spatial and temporal transcriptional activation leading to a specific expression in the male germline cells; this specific expression pattern is dependent of the regulatory region of DUO1 (ROD1) 5'-YAACYGY-3' in its promoter (PubMed:15694308, PubMed:27624837). First observed in the germ cell during or soon after engulfment by the vegetative cell, just after asymmetric division. In maturating pollen, accumulates in germ cells before mitosis and remains high in mature sperm cells. Expression persists during pollen development (PubMed:19300502).</text>
</comment>
<comment type="induction">
    <text evidence="7 10">Repressed by the microRNA 159 (miR159); the production of miR159 is stimulated by the anaphase promoting complex/cyclosome (APC/C) (PubMed:21441434). Activated by ARID1 in male germline cells via specific histone acetylation regulation (e.g. H3K9Ac) (PubMed:25057814).</text>
</comment>
<comment type="disruption phenotype">
    <text evidence="3 4 5 8 9">Loss of male fertility. Reduced expression of germline-specific genes (e.g. MGH3, GEX2 and GCS1) (PubMed:19300502). Blocked generative cell division resulting in the formation of bicellular pollen grains at anthesis. Pollen fails to enter mitosis at G2-M transition associated with reduced levels of CYCB1-1. Blocked generative cell division followed by endocycle during pollen maturation leads to single larger diploid sperm cell unable to perform fertilization (PubMed:15618418, PubMed:15694308, PubMed:19300502, PubMed:24876252). Enhanced polytubey (e.g. multiple pollen tubes entering ovules) (PubMed:22608506).</text>
</comment>
<comment type="sequence caution" evidence="14">
    <conflict type="erroneous initiation">
        <sequence resource="EMBL-CDS" id="ADL59373"/>
    </conflict>
    <text>Truncated N-terminus.</text>
</comment>
<comment type="sequence caution" evidence="14">
    <conflict type="erroneous initiation">
        <sequence resource="EMBL-CDS" id="CAB81832"/>
    </conflict>
    <text>Truncated N-terminus.</text>
</comment>
<accession>A0A178VEK7</accession>
<accession>Q9M213</accession>
<proteinExistence type="evidence at protein level"/>
<dbReference type="EMBL" id="HM776521">
    <property type="protein sequence ID" value="ADL59373.1"/>
    <property type="status" value="ALT_INIT"/>
    <property type="molecule type" value="mRNA"/>
</dbReference>
<dbReference type="EMBL" id="AL138646">
    <property type="protein sequence ID" value="CAB81832.1"/>
    <property type="status" value="ALT_INIT"/>
    <property type="molecule type" value="Genomic_DNA"/>
</dbReference>
<dbReference type="EMBL" id="CP002686">
    <property type="protein sequence ID" value="AEE80064.2"/>
    <property type="molecule type" value="Genomic_DNA"/>
</dbReference>
<dbReference type="EMBL" id="AF469468">
    <property type="protein sequence ID" value="AAL79015.1"/>
    <property type="molecule type" value="mRNA"/>
</dbReference>
<dbReference type="PIR" id="T47857">
    <property type="entry name" value="T47857"/>
</dbReference>
<dbReference type="RefSeq" id="NP_191605.2">
    <property type="nucleotide sequence ID" value="NM_115910.2"/>
</dbReference>
<dbReference type="SMR" id="A0A178VEK7"/>
<dbReference type="FunCoup" id="A0A178VEK7">
    <property type="interactions" value="28"/>
</dbReference>
<dbReference type="STRING" id="3702.A0A178VEK7"/>
<dbReference type="PaxDb" id="3702-AT3G60460.1"/>
<dbReference type="ProteomicsDB" id="222226"/>
<dbReference type="EnsemblPlants" id="AT3G60460.1">
    <property type="protein sequence ID" value="AT3G60460.1"/>
    <property type="gene ID" value="AT3G60460"/>
</dbReference>
<dbReference type="GeneID" id="825217"/>
<dbReference type="Gramene" id="AT3G60460.1">
    <property type="protein sequence ID" value="AT3G60460.1"/>
    <property type="gene ID" value="AT3G60460"/>
</dbReference>
<dbReference type="KEGG" id="ath:AT3G60460"/>
<dbReference type="Araport" id="AT3G60460"/>
<dbReference type="TAIR" id="AT3G60460">
    <property type="gene designation" value="DUO1"/>
</dbReference>
<dbReference type="eggNOG" id="KOG0048">
    <property type="taxonomic scope" value="Eukaryota"/>
</dbReference>
<dbReference type="InParanoid" id="A0A178VEK7"/>
<dbReference type="OMA" id="FAFWTDD"/>
<dbReference type="OrthoDB" id="2143914at2759"/>
<dbReference type="PRO" id="PR:A0A178VEK7"/>
<dbReference type="Proteomes" id="UP000006548">
    <property type="component" value="Chromosome 3"/>
</dbReference>
<dbReference type="ExpressionAtlas" id="A0A178VEK7">
    <property type="expression patterns" value="baseline and differential"/>
</dbReference>
<dbReference type="GO" id="GO:0048555">
    <property type="term" value="C:generative cell nucleus"/>
    <property type="evidence" value="ECO:0000314"/>
    <property type="project" value="UniProtKB"/>
</dbReference>
<dbReference type="GO" id="GO:0005634">
    <property type="term" value="C:nucleus"/>
    <property type="evidence" value="ECO:0000314"/>
    <property type="project" value="TAIR"/>
</dbReference>
<dbReference type="GO" id="GO:0003700">
    <property type="term" value="F:DNA-binding transcription factor activity"/>
    <property type="evidence" value="ECO:0000314"/>
    <property type="project" value="UniProtKB"/>
</dbReference>
<dbReference type="GO" id="GO:0043565">
    <property type="term" value="F:sequence-specific DNA binding"/>
    <property type="evidence" value="ECO:0000314"/>
    <property type="project" value="UniProtKB"/>
</dbReference>
<dbReference type="GO" id="GO:0044839">
    <property type="term" value="P:cell cycle G2/M phase transition"/>
    <property type="evidence" value="ECO:0000315"/>
    <property type="project" value="UniProtKB"/>
</dbReference>
<dbReference type="GO" id="GO:0055047">
    <property type="term" value="P:generative cell mitosis"/>
    <property type="evidence" value="ECO:0000315"/>
    <property type="project" value="UniProtKB"/>
</dbReference>
<dbReference type="GO" id="GO:0048235">
    <property type="term" value="P:pollen sperm cell differentiation"/>
    <property type="evidence" value="ECO:0000315"/>
    <property type="project" value="UniProtKB"/>
</dbReference>
<dbReference type="GO" id="GO:0045893">
    <property type="term" value="P:positive regulation of DNA-templated transcription"/>
    <property type="evidence" value="ECO:0000315"/>
    <property type="project" value="UniProtKB"/>
</dbReference>
<dbReference type="CDD" id="cd00167">
    <property type="entry name" value="SANT"/>
    <property type="match status" value="2"/>
</dbReference>
<dbReference type="FunFam" id="1.10.10.60:FF:000060">
    <property type="entry name" value="MYB transcription factor"/>
    <property type="match status" value="1"/>
</dbReference>
<dbReference type="FunFam" id="1.10.10.60:FF:000351">
    <property type="entry name" value="Transcription factor GAMYB"/>
    <property type="match status" value="1"/>
</dbReference>
<dbReference type="Gene3D" id="1.10.10.60">
    <property type="entry name" value="Homeodomain-like"/>
    <property type="match status" value="2"/>
</dbReference>
<dbReference type="InterPro" id="IPR009057">
    <property type="entry name" value="Homeodomain-like_sf"/>
</dbReference>
<dbReference type="InterPro" id="IPR017930">
    <property type="entry name" value="Myb_dom"/>
</dbReference>
<dbReference type="InterPro" id="IPR053106">
    <property type="entry name" value="Plant_Male-Germline_Reg_TFs"/>
</dbReference>
<dbReference type="InterPro" id="IPR001005">
    <property type="entry name" value="SANT/Myb"/>
</dbReference>
<dbReference type="PANTHER" id="PTHR47996">
    <property type="entry name" value="TRANSCRIPTION FACTOR DUO1"/>
    <property type="match status" value="1"/>
</dbReference>
<dbReference type="PANTHER" id="PTHR47996:SF3">
    <property type="entry name" value="TRANSCRIPTION FACTOR DUO1"/>
    <property type="match status" value="1"/>
</dbReference>
<dbReference type="Pfam" id="PF00249">
    <property type="entry name" value="Myb_DNA-binding"/>
    <property type="match status" value="2"/>
</dbReference>
<dbReference type="SMART" id="SM00717">
    <property type="entry name" value="SANT"/>
    <property type="match status" value="2"/>
</dbReference>
<dbReference type="SUPFAM" id="SSF46689">
    <property type="entry name" value="Homeodomain-like"/>
    <property type="match status" value="1"/>
</dbReference>
<dbReference type="PROSITE" id="PS51294">
    <property type="entry name" value="HTH_MYB"/>
    <property type="match status" value="2"/>
</dbReference>